<comment type="catalytic activity">
    <reaction evidence="1">
        <text>2-(N(omega)-L-arginino)succinate = fumarate + L-arginine</text>
        <dbReference type="Rhea" id="RHEA:24020"/>
        <dbReference type="ChEBI" id="CHEBI:29806"/>
        <dbReference type="ChEBI" id="CHEBI:32682"/>
        <dbReference type="ChEBI" id="CHEBI:57472"/>
        <dbReference type="EC" id="4.3.2.1"/>
    </reaction>
</comment>
<comment type="pathway">
    <text evidence="1">Amino-acid biosynthesis; L-arginine biosynthesis; L-arginine from L-ornithine and carbamoyl phosphate: step 3/3.</text>
</comment>
<comment type="subcellular location">
    <subcellularLocation>
        <location evidence="1">Cytoplasm</location>
    </subcellularLocation>
</comment>
<comment type="similarity">
    <text evidence="1">Belongs to the lyase 1 family. Argininosuccinate lyase subfamily.</text>
</comment>
<protein>
    <recommendedName>
        <fullName evidence="1">Argininosuccinate lyase</fullName>
        <shortName evidence="1">ASAL</shortName>
        <ecNumber evidence="1">4.3.2.1</ecNumber>
    </recommendedName>
    <alternativeName>
        <fullName evidence="1">Arginosuccinase</fullName>
    </alternativeName>
</protein>
<feature type="chain" id="PRO_0000240731" description="Argininosuccinate lyase">
    <location>
        <begin position="1"/>
        <end position="464"/>
    </location>
</feature>
<sequence>MRLWGGRFAGGPAEALARLSISVQFDWRLAPYDLLASKSHARVLHRAGLLDADELAAMLAALDELSDAVAQGRFRPTVEDEDVHTALERGLLERLGTLGGKLRAGRSRNDQVATDLRLYLRDSAREVAARLTELSHALVVLAEQHVDTPAPGMTHLQHAQPISFGHQLLAHVQAFVRDIDRLRDWDVRASVSALGAGALAGSSLPLDPQGVAAELGFDRAFANSLDAVSDRDFAAEFLFVAALIGVHLSRLGEEIVLWTTREFGWVELDDAFATGSSIMPQKKNPDVAELARGKSGRLIGDLTGFLATLKGLPLAYDRDLQEDKEPVFDAVDTLLLVLPALTGTVATMRVRRERLVAAAPDGFALATDVAEYLVRRGVPFRQAHEAVGQFVSWCVAHDVDLDEVSDDDLGMINPLLTPDVREVLSVRGALEARSAPGGTAPDRVREQIAALRPVLDRDQAWAVG</sequence>
<evidence type="ECO:0000255" key="1">
    <source>
        <dbReference type="HAMAP-Rule" id="MF_00006"/>
    </source>
</evidence>
<gene>
    <name evidence="1" type="primary">argH</name>
    <name type="ordered locus">Francci3_3168</name>
</gene>
<proteinExistence type="inferred from homology"/>
<name>ARLY_FRACC</name>
<reference key="1">
    <citation type="journal article" date="2007" name="Genome Res.">
        <title>Genome characteristics of facultatively symbiotic Frankia sp. strains reflect host range and host plant biogeography.</title>
        <authorList>
            <person name="Normand P."/>
            <person name="Lapierre P."/>
            <person name="Tisa L.S."/>
            <person name="Gogarten J.P."/>
            <person name="Alloisio N."/>
            <person name="Bagnarol E."/>
            <person name="Bassi C.A."/>
            <person name="Berry A.M."/>
            <person name="Bickhart D.M."/>
            <person name="Choisne N."/>
            <person name="Couloux A."/>
            <person name="Cournoyer B."/>
            <person name="Cruveiller S."/>
            <person name="Daubin V."/>
            <person name="Demange N."/>
            <person name="Francino M.P."/>
            <person name="Goltsman E."/>
            <person name="Huang Y."/>
            <person name="Kopp O.R."/>
            <person name="Labarre L."/>
            <person name="Lapidus A."/>
            <person name="Lavire C."/>
            <person name="Marechal J."/>
            <person name="Martinez M."/>
            <person name="Mastronunzio J.E."/>
            <person name="Mullin B.C."/>
            <person name="Niemann J."/>
            <person name="Pujic P."/>
            <person name="Rawnsley T."/>
            <person name="Rouy Z."/>
            <person name="Schenowitz C."/>
            <person name="Sellstedt A."/>
            <person name="Tavares F."/>
            <person name="Tomkins J.P."/>
            <person name="Vallenet D."/>
            <person name="Valverde C."/>
            <person name="Wall L.G."/>
            <person name="Wang Y."/>
            <person name="Medigue C."/>
            <person name="Benson D.R."/>
        </authorList>
    </citation>
    <scope>NUCLEOTIDE SEQUENCE [LARGE SCALE GENOMIC DNA]</scope>
    <source>
        <strain>DSM 45818 / CECT 9043 / HFP020203 / CcI3</strain>
    </source>
</reference>
<accession>Q2J867</accession>
<organism>
    <name type="scientific">Frankia casuarinae (strain DSM 45818 / CECT 9043 / HFP020203 / CcI3)</name>
    <dbReference type="NCBI Taxonomy" id="106370"/>
    <lineage>
        <taxon>Bacteria</taxon>
        <taxon>Bacillati</taxon>
        <taxon>Actinomycetota</taxon>
        <taxon>Actinomycetes</taxon>
        <taxon>Frankiales</taxon>
        <taxon>Frankiaceae</taxon>
        <taxon>Frankia</taxon>
    </lineage>
</organism>
<keyword id="KW-0028">Amino-acid biosynthesis</keyword>
<keyword id="KW-0055">Arginine biosynthesis</keyword>
<keyword id="KW-0963">Cytoplasm</keyword>
<keyword id="KW-0456">Lyase</keyword>
<keyword id="KW-1185">Reference proteome</keyword>
<dbReference type="EC" id="4.3.2.1" evidence="1"/>
<dbReference type="EMBL" id="CP000249">
    <property type="protein sequence ID" value="ABD12525.1"/>
    <property type="molecule type" value="Genomic_DNA"/>
</dbReference>
<dbReference type="RefSeq" id="WP_011437553.1">
    <property type="nucleotide sequence ID" value="NZ_JENI01000044.1"/>
</dbReference>
<dbReference type="SMR" id="Q2J867"/>
<dbReference type="STRING" id="106370.Francci3_3168"/>
<dbReference type="KEGG" id="fra:Francci3_3168"/>
<dbReference type="eggNOG" id="COG0165">
    <property type="taxonomic scope" value="Bacteria"/>
</dbReference>
<dbReference type="HOGENOM" id="CLU_027272_2_2_11"/>
<dbReference type="OrthoDB" id="9769623at2"/>
<dbReference type="PhylomeDB" id="Q2J867"/>
<dbReference type="UniPathway" id="UPA00068">
    <property type="reaction ID" value="UER00114"/>
</dbReference>
<dbReference type="Proteomes" id="UP000001937">
    <property type="component" value="Chromosome"/>
</dbReference>
<dbReference type="GO" id="GO:0005829">
    <property type="term" value="C:cytosol"/>
    <property type="evidence" value="ECO:0007669"/>
    <property type="project" value="TreeGrafter"/>
</dbReference>
<dbReference type="GO" id="GO:0004056">
    <property type="term" value="F:argininosuccinate lyase activity"/>
    <property type="evidence" value="ECO:0007669"/>
    <property type="project" value="UniProtKB-UniRule"/>
</dbReference>
<dbReference type="GO" id="GO:0042450">
    <property type="term" value="P:arginine biosynthetic process via ornithine"/>
    <property type="evidence" value="ECO:0007669"/>
    <property type="project" value="InterPro"/>
</dbReference>
<dbReference type="GO" id="GO:0006526">
    <property type="term" value="P:L-arginine biosynthetic process"/>
    <property type="evidence" value="ECO:0007669"/>
    <property type="project" value="UniProtKB-UniRule"/>
</dbReference>
<dbReference type="CDD" id="cd01359">
    <property type="entry name" value="Argininosuccinate_lyase"/>
    <property type="match status" value="1"/>
</dbReference>
<dbReference type="FunFam" id="1.10.40.30:FF:000001">
    <property type="entry name" value="Argininosuccinate lyase"/>
    <property type="match status" value="1"/>
</dbReference>
<dbReference type="FunFam" id="1.20.200.10:FF:000015">
    <property type="entry name" value="argininosuccinate lyase isoform X2"/>
    <property type="match status" value="1"/>
</dbReference>
<dbReference type="Gene3D" id="1.10.40.30">
    <property type="entry name" value="Fumarase/aspartase (C-terminal domain)"/>
    <property type="match status" value="1"/>
</dbReference>
<dbReference type="Gene3D" id="1.20.200.10">
    <property type="entry name" value="Fumarase/aspartase (Central domain)"/>
    <property type="match status" value="1"/>
</dbReference>
<dbReference type="Gene3D" id="1.10.275.10">
    <property type="entry name" value="Fumarase/aspartase (N-terminal domain)"/>
    <property type="match status" value="1"/>
</dbReference>
<dbReference type="HAMAP" id="MF_00006">
    <property type="entry name" value="Arg_succ_lyase"/>
    <property type="match status" value="1"/>
</dbReference>
<dbReference type="InterPro" id="IPR029419">
    <property type="entry name" value="Arg_succ_lyase_C"/>
</dbReference>
<dbReference type="InterPro" id="IPR009049">
    <property type="entry name" value="Argininosuccinate_lyase"/>
</dbReference>
<dbReference type="InterPro" id="IPR024083">
    <property type="entry name" value="Fumarase/histidase_N"/>
</dbReference>
<dbReference type="InterPro" id="IPR020557">
    <property type="entry name" value="Fumarate_lyase_CS"/>
</dbReference>
<dbReference type="InterPro" id="IPR000362">
    <property type="entry name" value="Fumarate_lyase_fam"/>
</dbReference>
<dbReference type="InterPro" id="IPR022761">
    <property type="entry name" value="Fumarate_lyase_N"/>
</dbReference>
<dbReference type="InterPro" id="IPR008948">
    <property type="entry name" value="L-Aspartase-like"/>
</dbReference>
<dbReference type="NCBIfam" id="TIGR00838">
    <property type="entry name" value="argH"/>
    <property type="match status" value="1"/>
</dbReference>
<dbReference type="PANTHER" id="PTHR43814">
    <property type="entry name" value="ARGININOSUCCINATE LYASE"/>
    <property type="match status" value="1"/>
</dbReference>
<dbReference type="PANTHER" id="PTHR43814:SF1">
    <property type="entry name" value="ARGININOSUCCINATE LYASE"/>
    <property type="match status" value="1"/>
</dbReference>
<dbReference type="Pfam" id="PF14698">
    <property type="entry name" value="ASL_C2"/>
    <property type="match status" value="1"/>
</dbReference>
<dbReference type="Pfam" id="PF00206">
    <property type="entry name" value="Lyase_1"/>
    <property type="match status" value="1"/>
</dbReference>
<dbReference type="PRINTS" id="PR00145">
    <property type="entry name" value="ARGSUCLYASE"/>
</dbReference>
<dbReference type="PRINTS" id="PR00149">
    <property type="entry name" value="FUMRATELYASE"/>
</dbReference>
<dbReference type="SUPFAM" id="SSF48557">
    <property type="entry name" value="L-aspartase-like"/>
    <property type="match status" value="1"/>
</dbReference>
<dbReference type="PROSITE" id="PS00163">
    <property type="entry name" value="FUMARATE_LYASES"/>
    <property type="match status" value="1"/>
</dbReference>